<feature type="signal peptide" evidence="3">
    <location>
        <begin position="1"/>
        <end position="23"/>
    </location>
</feature>
<feature type="chain" id="PRO_0000457618" description="Soluble interferon alpha/beta receptor OPG204" evidence="3">
    <location>
        <begin position="24"/>
        <end position="351"/>
    </location>
</feature>
<feature type="domain" description="Ig-like C2-type 1" evidence="1">
    <location>
        <begin position="65"/>
        <end position="137"/>
    </location>
</feature>
<feature type="domain" description="Ig-like C2-type 2" evidence="1">
    <location>
        <begin position="155"/>
        <end position="237"/>
    </location>
</feature>
<feature type="domain" description="Ig-like V-type" evidence="1">
    <location>
        <begin position="246"/>
        <end position="345"/>
    </location>
</feature>
<feature type="glycosylation site" description="N-linked (GlcNAc...) asparagine; by host" evidence="3">
    <location>
        <position position="117"/>
    </location>
</feature>
<feature type="glycosylation site" description="N-linked (GlcNAc...) asparagine; by host" evidence="3">
    <location>
        <position position="182"/>
    </location>
</feature>
<feature type="glycosylation site" description="N-linked (GlcNAc...) asparagine; by host" evidence="3">
    <location>
        <position position="261"/>
    </location>
</feature>
<feature type="glycosylation site" description="N-linked (GlcNAc...) asparagine; by host" evidence="3">
    <location>
        <position position="269"/>
    </location>
</feature>
<feature type="glycosylation site" description="N-linked (GlcNAc...) asparagine; by host" evidence="3">
    <location>
        <position position="321"/>
    </location>
</feature>
<feature type="disulfide bond" evidence="4">
    <location>
        <begin position="73"/>
        <end position="129"/>
    </location>
</feature>
<feature type="disulfide bond" evidence="4">
    <location>
        <begin position="172"/>
        <end position="221"/>
    </location>
</feature>
<feature type="disulfide bond" evidence="4">
    <location>
        <begin position="272"/>
        <end position="333"/>
    </location>
</feature>
<proteinExistence type="evidence at transcript level"/>
<name>PG204_MONPV</name>
<gene>
    <name type="primary">OPG204</name>
    <name type="ORF">MPXVgp177</name>
</gene>
<evidence type="ECO:0000250" key="1">
    <source>
        <dbReference type="UniProtKB" id="P23998"/>
    </source>
</evidence>
<evidence type="ECO:0000250" key="2">
    <source>
        <dbReference type="UniProtKB" id="P25213"/>
    </source>
</evidence>
<evidence type="ECO:0000255" key="3"/>
<evidence type="ECO:0000255" key="4">
    <source>
        <dbReference type="PROSITE-ProRule" id="PRU00114"/>
    </source>
</evidence>
<evidence type="ECO:0000305" key="5"/>
<organismHost>
    <name type="scientific">Cynomys gunnisoni</name>
    <name type="common">Gunnison's prairie dog</name>
    <name type="synonym">Spermophilus gunnisoni</name>
    <dbReference type="NCBI Taxonomy" id="45479"/>
</organismHost>
<organismHost>
    <name type="scientific">Cynomys leucurus</name>
    <name type="common">White-tailed prairie dog</name>
    <dbReference type="NCBI Taxonomy" id="99825"/>
</organismHost>
<organismHost>
    <name type="scientific">Cynomys ludovicianus</name>
    <name type="common">Black-tailed prairie dog</name>
    <dbReference type="NCBI Taxonomy" id="45480"/>
</organismHost>
<organismHost>
    <name type="scientific">Cynomys mexicanus</name>
    <name type="common">Mexican prairie dog</name>
    <dbReference type="NCBI Taxonomy" id="99826"/>
</organismHost>
<organismHost>
    <name type="scientific">Cynomys parvidens</name>
    <name type="common">Utah prairie dog</name>
    <dbReference type="NCBI Taxonomy" id="99827"/>
</organismHost>
<organismHost>
    <name type="scientific">Gliridae</name>
    <name type="common">dormice</name>
    <dbReference type="NCBI Taxonomy" id="30650"/>
</organismHost>
<organismHost>
    <name type="scientific">Heliosciurus ruwenzorii</name>
    <name type="common">Ruwenzori sun squirrel</name>
    <dbReference type="NCBI Taxonomy" id="226685"/>
</organismHost>
<organismHost>
    <name type="scientific">Homo sapiens</name>
    <name type="common">Human</name>
    <dbReference type="NCBI Taxonomy" id="9606"/>
</organismHost>
<organismHost>
    <name type="scientific">Mus musculus</name>
    <name type="common">Mouse</name>
    <dbReference type="NCBI Taxonomy" id="10090"/>
</organismHost>
<comment type="function">
    <text evidence="2">Counteracts the antiviral effects of host IFN-alpha/beta and key IFN-inducible proteins involved in viral RNA degradation suxh as host OAS1. Acts as a soluble IFN-alpha receptor and thus inhibits the interaction between host IFN-alpha and its receptor.</text>
</comment>
<comment type="subunit">
    <text evidence="2">Interacts with host IFNA1.</text>
</comment>
<comment type="subcellular location">
    <subcellularLocation>
        <location evidence="2">Secreted</location>
    </subcellularLocation>
    <text evidence="2">Found associated with both uninfected and infected host cell membranes after secretion.</text>
</comment>
<comment type="induction">
    <text>Expressed in the early phase of the viral replicative cycle.</text>
</comment>
<comment type="similarity">
    <text evidence="5">Belongs to the interleukin-1 receptor family.</text>
</comment>
<keyword id="KW-1015">Disulfide bond</keyword>
<keyword id="KW-0244">Early protein</keyword>
<keyword id="KW-0325">Glycoprotein</keyword>
<keyword id="KW-0945">Host-virus interaction</keyword>
<keyword id="KW-0393">Immunoglobulin domain</keyword>
<keyword id="KW-1090">Inhibition of host innate immune response by virus</keyword>
<keyword id="KW-1114">Inhibition of host interferon signaling pathway by virus</keyword>
<keyword id="KW-0922">Interferon antiviral system evasion</keyword>
<keyword id="KW-1185">Reference proteome</keyword>
<keyword id="KW-0677">Repeat</keyword>
<keyword id="KW-0964">Secreted</keyword>
<keyword id="KW-0732">Signal</keyword>
<keyword id="KW-0899">Viral immunoevasion</keyword>
<dbReference type="EMBL" id="MT903340">
    <property type="protein sequence ID" value="QNP13045.1"/>
    <property type="molecule type" value="Genomic_DNA"/>
</dbReference>
<dbReference type="RefSeq" id="YP_010377172.1">
    <property type="nucleotide sequence ID" value="NC_063383.1"/>
</dbReference>
<dbReference type="SMR" id="A0A7H0DNG2"/>
<dbReference type="GeneID" id="72551585"/>
<dbReference type="Proteomes" id="UP000516359">
    <property type="component" value="Genome"/>
</dbReference>
<dbReference type="GO" id="GO:0005576">
    <property type="term" value="C:extracellular region"/>
    <property type="evidence" value="ECO:0007669"/>
    <property type="project" value="UniProtKB-SubCell"/>
</dbReference>
<dbReference type="GO" id="GO:0052170">
    <property type="term" value="P:symbiont-mediated suppression of host innate immune response"/>
    <property type="evidence" value="ECO:0007669"/>
    <property type="project" value="UniProtKB-KW"/>
</dbReference>
<dbReference type="GO" id="GO:0039502">
    <property type="term" value="P:symbiont-mediated suppression of host type I interferon-mediated signaling pathway"/>
    <property type="evidence" value="ECO:0007669"/>
    <property type="project" value="UniProtKB-KW"/>
</dbReference>
<dbReference type="CDD" id="cd00096">
    <property type="entry name" value="Ig"/>
    <property type="match status" value="1"/>
</dbReference>
<dbReference type="Gene3D" id="2.60.40.10">
    <property type="entry name" value="Immunoglobulins"/>
    <property type="match status" value="3"/>
</dbReference>
<dbReference type="InterPro" id="IPR007110">
    <property type="entry name" value="Ig-like_dom"/>
</dbReference>
<dbReference type="InterPro" id="IPR036179">
    <property type="entry name" value="Ig-like_dom_sf"/>
</dbReference>
<dbReference type="InterPro" id="IPR013783">
    <property type="entry name" value="Ig-like_fold"/>
</dbReference>
<dbReference type="InterPro" id="IPR003599">
    <property type="entry name" value="Ig_sub"/>
</dbReference>
<dbReference type="InterPro" id="IPR015621">
    <property type="entry name" value="IL-1_rcpt_fam"/>
</dbReference>
<dbReference type="InterPro" id="IPR013151">
    <property type="entry name" value="Immunoglobulin_dom"/>
</dbReference>
<dbReference type="PANTHER" id="PTHR11890">
    <property type="entry name" value="INTERLEUKIN-1 RECEPTOR FAMILY MEMBER"/>
    <property type="match status" value="1"/>
</dbReference>
<dbReference type="PANTHER" id="PTHR11890:SF44">
    <property type="entry name" value="X-LINKED INTERLEUKIN-1 RECEPTOR ACCESSORY PROTEIN-LIKE 2"/>
    <property type="match status" value="1"/>
</dbReference>
<dbReference type="Pfam" id="PF00047">
    <property type="entry name" value="ig"/>
    <property type="match status" value="1"/>
</dbReference>
<dbReference type="Pfam" id="PF13895">
    <property type="entry name" value="Ig_2"/>
    <property type="match status" value="1"/>
</dbReference>
<dbReference type="SMART" id="SM00409">
    <property type="entry name" value="IG"/>
    <property type="match status" value="2"/>
</dbReference>
<dbReference type="SUPFAM" id="SSF48726">
    <property type="entry name" value="Immunoglobulin"/>
    <property type="match status" value="2"/>
</dbReference>
<dbReference type="PROSITE" id="PS50835">
    <property type="entry name" value="IG_LIKE"/>
    <property type="match status" value="2"/>
</dbReference>
<protein>
    <recommendedName>
        <fullName>Soluble interferon alpha/beta receptor OPG204</fullName>
    </recommendedName>
</protein>
<organism>
    <name type="scientific">Monkeypox virus</name>
    <dbReference type="NCBI Taxonomy" id="10244"/>
    <lineage>
        <taxon>Viruses</taxon>
        <taxon>Varidnaviria</taxon>
        <taxon>Bamfordvirae</taxon>
        <taxon>Nucleocytoviricota</taxon>
        <taxon>Pokkesviricetes</taxon>
        <taxon>Chitovirales</taxon>
        <taxon>Poxviridae</taxon>
        <taxon>Chordopoxvirinae</taxon>
        <taxon>Orthopoxvirus</taxon>
    </lineage>
</organism>
<sequence>MKMKMMVRIYFVSLSLLLFHSYAIDIENEITEFFNKMRDTLPAKDSKWLNPVCMFGGTMNDMAALGEPFSAKCPPIEDSLLSHRYKDYVVKWERLEKNRRRQVSNKRVKHGDLWIANYTSKFSNRRYLCTVTTKNGDCVQGVVRSHVWKPSSCIPKTYELGTYDKYGIDLYCGILYANHYNNITWYKDNKEINIDDFKYSQAGKELIIHNPELEDSGRYDCYVHYDDVRIKNDIVVSRCKILTVIPSQDHRFKLILDPKINVTIGEPANITCSAVSTSLFVDDVLIEWENPSGWIIGLDFGVYSILTSRGGITEATLYFENVTEEYIGNTYTCRGHNYYFDKTLTTTVVLE</sequence>
<accession>A0A7H0DNG2</accession>
<reference key="1">
    <citation type="journal article" date="2022" name="J. Infect. Dis.">
        <title>Exportation of Monkeypox virus from the African continent.</title>
        <authorList>
            <person name="Mauldin M.R."/>
            <person name="McCollum A.M."/>
            <person name="Nakazawa Y.J."/>
            <person name="Mandra A."/>
            <person name="Whitehouse E.R."/>
            <person name="Davidson W."/>
            <person name="Zhao H."/>
            <person name="Gao J."/>
            <person name="Li Y."/>
            <person name="Doty J."/>
            <person name="Yinka-Ogunleye A."/>
            <person name="Akinpelu A."/>
            <person name="Aruna O."/>
            <person name="Naidoo D."/>
            <person name="Lewandowski K."/>
            <person name="Afrough B."/>
            <person name="Graham V."/>
            <person name="Aarons E."/>
            <person name="Hewson R."/>
            <person name="Vipond R."/>
            <person name="Dunning J."/>
            <person name="Chand M."/>
            <person name="Brown C."/>
            <person name="Cohen-Gihon I."/>
            <person name="Erez N."/>
            <person name="Shifman O."/>
            <person name="Israeli O."/>
            <person name="Sharon M."/>
            <person name="Schwartz E."/>
            <person name="Beth-Din A."/>
            <person name="Zvi A."/>
            <person name="Mak T.M."/>
            <person name="Ng Y.K."/>
            <person name="Cui L."/>
            <person name="Lin R.T.P."/>
            <person name="Olson V.A."/>
            <person name="Brooks T."/>
            <person name="Paran N."/>
            <person name="Ihekweazu C."/>
            <person name="Reynolds M.G."/>
        </authorList>
    </citation>
    <scope>NUCLEOTIDE SEQUENCE [LARGE SCALE GENOMIC DNA]</scope>
    <source>
        <strain>MPXV-M5312_HM12_Rivers</strain>
    </source>
</reference>